<keyword id="KW-0007">Acetylation</keyword>
<keyword id="KW-0113">Calvin cycle</keyword>
<keyword id="KW-0120">Carbon dioxide fixation</keyword>
<keyword id="KW-0150">Chloroplast</keyword>
<keyword id="KW-1015">Disulfide bond</keyword>
<keyword id="KW-0456">Lyase</keyword>
<keyword id="KW-0460">Magnesium</keyword>
<keyword id="KW-0479">Metal-binding</keyword>
<keyword id="KW-0488">Methylation</keyword>
<keyword id="KW-0503">Monooxygenase</keyword>
<keyword id="KW-0560">Oxidoreductase</keyword>
<keyword id="KW-0601">Photorespiration</keyword>
<keyword id="KW-0602">Photosynthesis</keyword>
<keyword id="KW-0934">Plastid</keyword>
<protein>
    <recommendedName>
        <fullName evidence="1">Ribulose bisphosphate carboxylase large chain</fullName>
        <shortName evidence="1">RuBisCO large subunit</shortName>
        <ecNumber evidence="1">4.1.1.39</ecNumber>
    </recommendedName>
</protein>
<gene>
    <name evidence="1" type="primary">rbcL</name>
</gene>
<feature type="propeptide" id="PRO_0000251424" evidence="1">
    <location>
        <begin position="1"/>
        <end position="2"/>
    </location>
</feature>
<feature type="chain" id="PRO_0000251425" description="Ribulose bisphosphate carboxylase large chain">
    <location>
        <begin position="3"/>
        <end position="477"/>
    </location>
</feature>
<feature type="active site" description="Proton acceptor" evidence="1">
    <location>
        <position position="175"/>
    </location>
</feature>
<feature type="active site" description="Proton acceptor" evidence="1">
    <location>
        <position position="294"/>
    </location>
</feature>
<feature type="binding site" description="in homodimeric partner" evidence="1">
    <location>
        <position position="123"/>
    </location>
    <ligand>
        <name>substrate</name>
    </ligand>
</feature>
<feature type="binding site" evidence="1">
    <location>
        <position position="173"/>
    </location>
    <ligand>
        <name>substrate</name>
    </ligand>
</feature>
<feature type="binding site" evidence="1">
    <location>
        <position position="177"/>
    </location>
    <ligand>
        <name>substrate</name>
    </ligand>
</feature>
<feature type="binding site" description="via carbamate group" evidence="1">
    <location>
        <position position="201"/>
    </location>
    <ligand>
        <name>Mg(2+)</name>
        <dbReference type="ChEBI" id="CHEBI:18420"/>
    </ligand>
</feature>
<feature type="binding site" evidence="1">
    <location>
        <position position="203"/>
    </location>
    <ligand>
        <name>Mg(2+)</name>
        <dbReference type="ChEBI" id="CHEBI:18420"/>
    </ligand>
</feature>
<feature type="binding site" evidence="1">
    <location>
        <position position="204"/>
    </location>
    <ligand>
        <name>Mg(2+)</name>
        <dbReference type="ChEBI" id="CHEBI:18420"/>
    </ligand>
</feature>
<feature type="binding site" evidence="1">
    <location>
        <position position="295"/>
    </location>
    <ligand>
        <name>substrate</name>
    </ligand>
</feature>
<feature type="binding site" evidence="1">
    <location>
        <position position="327"/>
    </location>
    <ligand>
        <name>substrate</name>
    </ligand>
</feature>
<feature type="binding site" evidence="1">
    <location>
        <position position="379"/>
    </location>
    <ligand>
        <name>substrate</name>
    </ligand>
</feature>
<feature type="site" description="Transition state stabilizer" evidence="1">
    <location>
        <position position="334"/>
    </location>
</feature>
<feature type="modified residue" description="N-acetylproline" evidence="1">
    <location>
        <position position="3"/>
    </location>
</feature>
<feature type="modified residue" description="N6,N6,N6-trimethyllysine" evidence="1">
    <location>
        <position position="14"/>
    </location>
</feature>
<feature type="modified residue" description="N6-carboxylysine" evidence="1">
    <location>
        <position position="201"/>
    </location>
</feature>
<feature type="disulfide bond" description="Interchain; in linked form" evidence="1">
    <location>
        <position position="247"/>
    </location>
</feature>
<sequence>MSPQTETKASVGFKAGVKEYKLTYYTPEYQTKDTDILAAFRVTPQPGVPPEEAGAAVAAESSTGTWTTVWTDGLTSLDRYKGRCYRIERVVGEKDQYIAYVAYPLDLFEEGSVTNMFTSIVGNVFGFKALRALRLEDLRIPPAYVKTFQGPPHGIQVERDKLNKYGRPLLGCTIKPKLGLSAKNYGRAVYECLRGGLDFTKDDENVNSQPFMRWRDRFLFCAEALYKAQAETGEIKGHYLNATAGTCEEMIKRAVFARELGVPIVMHDYLTGGFTANTSLAHYCRDNGLLLHIHRAMHAVIDRQKNHGIHFRVLAKALRMSGGDHIHSGTVVGKLEGERDITLGFVDLLRDDFVEQDRSRGIYFTQDWVSLPGVLPVASGGIHVWHMPALTEIFGDDSVLQFGGGTLGHPWGNAPGAVANRVALEACVQARNEGRDLAQEGNEIIREACKWSPELAAACEVWKEIVFNFAAVDVLDK</sequence>
<organism>
    <name type="scientific">Nicotiana tomentosiformis</name>
    <name type="common">Tobacco</name>
    <dbReference type="NCBI Taxonomy" id="4098"/>
    <lineage>
        <taxon>Eukaryota</taxon>
        <taxon>Viridiplantae</taxon>
        <taxon>Streptophyta</taxon>
        <taxon>Embryophyta</taxon>
        <taxon>Tracheophyta</taxon>
        <taxon>Spermatophyta</taxon>
        <taxon>Magnoliopsida</taxon>
        <taxon>eudicotyledons</taxon>
        <taxon>Gunneridae</taxon>
        <taxon>Pentapetalae</taxon>
        <taxon>asterids</taxon>
        <taxon>lamiids</taxon>
        <taxon>Solanales</taxon>
        <taxon>Solanaceae</taxon>
        <taxon>Nicotianoideae</taxon>
        <taxon>Nicotianeae</taxon>
        <taxon>Nicotiana</taxon>
    </lineage>
</organism>
<name>RBL_NICTO</name>
<accession>Q33C26</accession>
<evidence type="ECO:0000255" key="1">
    <source>
        <dbReference type="HAMAP-Rule" id="MF_01338"/>
    </source>
</evidence>
<reference key="1">
    <citation type="journal article" date="2006" name="Mol. Genet. Genomics">
        <title>The chloroplast genome of Nicotiana sylvestris and Nicotiana tomentosiformis: complete sequencing confirms that the Nicotiana sylvestris progenitor is the maternal genome donor of Nicotiana tabacum.</title>
        <authorList>
            <person name="Yukawa M."/>
            <person name="Tsudzuki T."/>
            <person name="Sugiura M."/>
        </authorList>
    </citation>
    <scope>NUCLEOTIDE SEQUENCE [LARGE SCALE GENOMIC DNA]</scope>
</reference>
<proteinExistence type="inferred from homology"/>
<comment type="function">
    <text evidence="1">RuBisCO catalyzes two reactions: the carboxylation of D-ribulose 1,5-bisphosphate, the primary event in carbon dioxide fixation, as well as the oxidative fragmentation of the pentose substrate in the photorespiration process. Both reactions occur simultaneously and in competition at the same active site.</text>
</comment>
<comment type="catalytic activity">
    <reaction evidence="1">
        <text>2 (2R)-3-phosphoglycerate + 2 H(+) = D-ribulose 1,5-bisphosphate + CO2 + H2O</text>
        <dbReference type="Rhea" id="RHEA:23124"/>
        <dbReference type="ChEBI" id="CHEBI:15377"/>
        <dbReference type="ChEBI" id="CHEBI:15378"/>
        <dbReference type="ChEBI" id="CHEBI:16526"/>
        <dbReference type="ChEBI" id="CHEBI:57870"/>
        <dbReference type="ChEBI" id="CHEBI:58272"/>
        <dbReference type="EC" id="4.1.1.39"/>
    </reaction>
</comment>
<comment type="catalytic activity">
    <reaction evidence="1">
        <text>D-ribulose 1,5-bisphosphate + O2 = 2-phosphoglycolate + (2R)-3-phosphoglycerate + 2 H(+)</text>
        <dbReference type="Rhea" id="RHEA:36631"/>
        <dbReference type="ChEBI" id="CHEBI:15378"/>
        <dbReference type="ChEBI" id="CHEBI:15379"/>
        <dbReference type="ChEBI" id="CHEBI:57870"/>
        <dbReference type="ChEBI" id="CHEBI:58033"/>
        <dbReference type="ChEBI" id="CHEBI:58272"/>
    </reaction>
</comment>
<comment type="cofactor">
    <cofactor evidence="1">
        <name>Mg(2+)</name>
        <dbReference type="ChEBI" id="CHEBI:18420"/>
    </cofactor>
    <text evidence="1">Binds 1 Mg(2+) ion per subunit.</text>
</comment>
<comment type="subunit">
    <text evidence="1">Heterohexadecamer of 8 large chains and 8 small chains; disulfide-linked. The disulfide link is formed within the large subunit homodimers.</text>
</comment>
<comment type="subcellular location">
    <subcellularLocation>
        <location>Plastid</location>
        <location>Chloroplast</location>
    </subcellularLocation>
</comment>
<comment type="PTM">
    <text evidence="1">The disulfide bond which can form in the large chain dimeric partners within the hexadecamer appears to be associated with oxidative stress and protein turnover.</text>
</comment>
<comment type="miscellaneous">
    <text evidence="1">The basic functional RuBisCO is composed of a large chain homodimer in a 'head-to-tail' conformation. In form I RuBisCO this homodimer is arranged in a barrel-like tetramer with the small subunits forming a tetrameric 'cap' on each end of the 'barrel'.</text>
</comment>
<comment type="similarity">
    <text evidence="1">Belongs to the RuBisCO large chain family. Type I subfamily.</text>
</comment>
<geneLocation type="chloroplast"/>
<dbReference type="EC" id="4.1.1.39" evidence="1"/>
<dbReference type="EMBL" id="AB240139">
    <property type="protein sequence ID" value="BAE48009.1"/>
    <property type="molecule type" value="Genomic_DNA"/>
</dbReference>
<dbReference type="RefSeq" id="YP_398871.1">
    <property type="nucleotide sequence ID" value="NC_007602.1"/>
</dbReference>
<dbReference type="SMR" id="Q33C26"/>
<dbReference type="GeneID" id="3776288"/>
<dbReference type="KEGG" id="nto:3776288"/>
<dbReference type="OrthoDB" id="1578724at2759"/>
<dbReference type="GO" id="GO:0009507">
    <property type="term" value="C:chloroplast"/>
    <property type="evidence" value="ECO:0007669"/>
    <property type="project" value="UniProtKB-SubCell"/>
</dbReference>
<dbReference type="GO" id="GO:0000287">
    <property type="term" value="F:magnesium ion binding"/>
    <property type="evidence" value="ECO:0007669"/>
    <property type="project" value="UniProtKB-UniRule"/>
</dbReference>
<dbReference type="GO" id="GO:0004497">
    <property type="term" value="F:monooxygenase activity"/>
    <property type="evidence" value="ECO:0007669"/>
    <property type="project" value="UniProtKB-KW"/>
</dbReference>
<dbReference type="GO" id="GO:0016984">
    <property type="term" value="F:ribulose-bisphosphate carboxylase activity"/>
    <property type="evidence" value="ECO:0007669"/>
    <property type="project" value="UniProtKB-UniRule"/>
</dbReference>
<dbReference type="GO" id="GO:0009853">
    <property type="term" value="P:photorespiration"/>
    <property type="evidence" value="ECO:0007669"/>
    <property type="project" value="UniProtKB-KW"/>
</dbReference>
<dbReference type="GO" id="GO:0019253">
    <property type="term" value="P:reductive pentose-phosphate cycle"/>
    <property type="evidence" value="ECO:0007669"/>
    <property type="project" value="UniProtKB-UniRule"/>
</dbReference>
<dbReference type="CDD" id="cd08212">
    <property type="entry name" value="RuBisCO_large_I"/>
    <property type="match status" value="1"/>
</dbReference>
<dbReference type="FunFam" id="3.20.20.110:FF:000001">
    <property type="entry name" value="Ribulose bisphosphate carboxylase large chain"/>
    <property type="match status" value="1"/>
</dbReference>
<dbReference type="FunFam" id="3.30.70.150:FF:000001">
    <property type="entry name" value="Ribulose bisphosphate carboxylase large chain"/>
    <property type="match status" value="1"/>
</dbReference>
<dbReference type="Gene3D" id="3.20.20.110">
    <property type="entry name" value="Ribulose bisphosphate carboxylase, large subunit, C-terminal domain"/>
    <property type="match status" value="1"/>
</dbReference>
<dbReference type="Gene3D" id="3.30.70.150">
    <property type="entry name" value="RuBisCO large subunit, N-terminal domain"/>
    <property type="match status" value="1"/>
</dbReference>
<dbReference type="HAMAP" id="MF_01338">
    <property type="entry name" value="RuBisCO_L_type1"/>
    <property type="match status" value="1"/>
</dbReference>
<dbReference type="InterPro" id="IPR033966">
    <property type="entry name" value="RuBisCO"/>
</dbReference>
<dbReference type="InterPro" id="IPR020878">
    <property type="entry name" value="RuBisCo_large_chain_AS"/>
</dbReference>
<dbReference type="InterPro" id="IPR000685">
    <property type="entry name" value="RuBisCO_lsu_C"/>
</dbReference>
<dbReference type="InterPro" id="IPR036376">
    <property type="entry name" value="RuBisCO_lsu_C_sf"/>
</dbReference>
<dbReference type="InterPro" id="IPR017443">
    <property type="entry name" value="RuBisCO_lsu_fd_N"/>
</dbReference>
<dbReference type="InterPro" id="IPR036422">
    <property type="entry name" value="RuBisCO_lsu_N_sf"/>
</dbReference>
<dbReference type="InterPro" id="IPR020888">
    <property type="entry name" value="RuBisCO_lsuI"/>
</dbReference>
<dbReference type="NCBIfam" id="NF003252">
    <property type="entry name" value="PRK04208.1"/>
    <property type="match status" value="1"/>
</dbReference>
<dbReference type="PANTHER" id="PTHR42704">
    <property type="entry name" value="RIBULOSE BISPHOSPHATE CARBOXYLASE"/>
    <property type="match status" value="1"/>
</dbReference>
<dbReference type="PANTHER" id="PTHR42704:SF16">
    <property type="entry name" value="RIBULOSE BISPHOSPHATE CARBOXYLASE LARGE CHAIN"/>
    <property type="match status" value="1"/>
</dbReference>
<dbReference type="Pfam" id="PF00016">
    <property type="entry name" value="RuBisCO_large"/>
    <property type="match status" value="1"/>
</dbReference>
<dbReference type="Pfam" id="PF02788">
    <property type="entry name" value="RuBisCO_large_N"/>
    <property type="match status" value="1"/>
</dbReference>
<dbReference type="SFLD" id="SFLDG01052">
    <property type="entry name" value="RuBisCO"/>
    <property type="match status" value="1"/>
</dbReference>
<dbReference type="SFLD" id="SFLDS00014">
    <property type="entry name" value="RuBisCO"/>
    <property type="match status" value="1"/>
</dbReference>
<dbReference type="SFLD" id="SFLDG00301">
    <property type="entry name" value="RuBisCO-like_proteins"/>
    <property type="match status" value="1"/>
</dbReference>
<dbReference type="SUPFAM" id="SSF51649">
    <property type="entry name" value="RuBisCo, C-terminal domain"/>
    <property type="match status" value="1"/>
</dbReference>
<dbReference type="SUPFAM" id="SSF54966">
    <property type="entry name" value="RuBisCO, large subunit, small (N-terminal) domain"/>
    <property type="match status" value="1"/>
</dbReference>
<dbReference type="PROSITE" id="PS00157">
    <property type="entry name" value="RUBISCO_LARGE"/>
    <property type="match status" value="1"/>
</dbReference>